<dbReference type="EMBL" id="Z98756">
    <property type="protein sequence ID" value="CAB11440.1"/>
    <property type="molecule type" value="Genomic_DNA"/>
</dbReference>
<dbReference type="EMBL" id="AL583923">
    <property type="protein sequence ID" value="CAC30811.1"/>
    <property type="molecule type" value="Genomic_DNA"/>
</dbReference>
<dbReference type="PIR" id="T45370">
    <property type="entry name" value="T45370"/>
</dbReference>
<dbReference type="RefSeq" id="NP_302259.1">
    <property type="nucleotide sequence ID" value="NC_002677.1"/>
</dbReference>
<dbReference type="RefSeq" id="WP_010908580.1">
    <property type="nucleotide sequence ID" value="NC_002677.1"/>
</dbReference>
<dbReference type="SMR" id="O32987"/>
<dbReference type="STRING" id="272631.gene:17575705"/>
<dbReference type="KEGG" id="mle:ML1857"/>
<dbReference type="PATRIC" id="fig|272631.5.peg.3518"/>
<dbReference type="Leproma" id="ML1857"/>
<dbReference type="eggNOG" id="COG0092">
    <property type="taxonomic scope" value="Bacteria"/>
</dbReference>
<dbReference type="HOGENOM" id="CLU_058591_0_0_11"/>
<dbReference type="OrthoDB" id="9806396at2"/>
<dbReference type="Proteomes" id="UP000000806">
    <property type="component" value="Chromosome"/>
</dbReference>
<dbReference type="GO" id="GO:0022627">
    <property type="term" value="C:cytosolic small ribosomal subunit"/>
    <property type="evidence" value="ECO:0007669"/>
    <property type="project" value="TreeGrafter"/>
</dbReference>
<dbReference type="GO" id="GO:0003729">
    <property type="term" value="F:mRNA binding"/>
    <property type="evidence" value="ECO:0007669"/>
    <property type="project" value="UniProtKB-UniRule"/>
</dbReference>
<dbReference type="GO" id="GO:0019843">
    <property type="term" value="F:rRNA binding"/>
    <property type="evidence" value="ECO:0007669"/>
    <property type="project" value="UniProtKB-UniRule"/>
</dbReference>
<dbReference type="GO" id="GO:0003735">
    <property type="term" value="F:structural constituent of ribosome"/>
    <property type="evidence" value="ECO:0007669"/>
    <property type="project" value="InterPro"/>
</dbReference>
<dbReference type="GO" id="GO:0006412">
    <property type="term" value="P:translation"/>
    <property type="evidence" value="ECO:0007669"/>
    <property type="project" value="UniProtKB-UniRule"/>
</dbReference>
<dbReference type="CDD" id="cd02412">
    <property type="entry name" value="KH-II_30S_S3"/>
    <property type="match status" value="1"/>
</dbReference>
<dbReference type="FunFam" id="3.30.1140.32:FF:000002">
    <property type="entry name" value="30S ribosomal protein S3"/>
    <property type="match status" value="1"/>
</dbReference>
<dbReference type="FunFam" id="3.30.300.20:FF:000001">
    <property type="entry name" value="30S ribosomal protein S3"/>
    <property type="match status" value="1"/>
</dbReference>
<dbReference type="Gene3D" id="3.30.300.20">
    <property type="match status" value="1"/>
</dbReference>
<dbReference type="Gene3D" id="3.30.1140.32">
    <property type="entry name" value="Ribosomal protein S3, C-terminal domain"/>
    <property type="match status" value="1"/>
</dbReference>
<dbReference type="HAMAP" id="MF_01309_B">
    <property type="entry name" value="Ribosomal_uS3_B"/>
    <property type="match status" value="1"/>
</dbReference>
<dbReference type="InterPro" id="IPR004087">
    <property type="entry name" value="KH_dom"/>
</dbReference>
<dbReference type="InterPro" id="IPR015946">
    <property type="entry name" value="KH_dom-like_a/b"/>
</dbReference>
<dbReference type="InterPro" id="IPR004044">
    <property type="entry name" value="KH_dom_type_2"/>
</dbReference>
<dbReference type="InterPro" id="IPR009019">
    <property type="entry name" value="KH_sf_prok-type"/>
</dbReference>
<dbReference type="InterPro" id="IPR036419">
    <property type="entry name" value="Ribosomal_S3_C_sf"/>
</dbReference>
<dbReference type="InterPro" id="IPR005704">
    <property type="entry name" value="Ribosomal_uS3_bac-typ"/>
</dbReference>
<dbReference type="InterPro" id="IPR001351">
    <property type="entry name" value="Ribosomal_uS3_C"/>
</dbReference>
<dbReference type="InterPro" id="IPR018280">
    <property type="entry name" value="Ribosomal_uS3_CS"/>
</dbReference>
<dbReference type="NCBIfam" id="TIGR01009">
    <property type="entry name" value="rpsC_bact"/>
    <property type="match status" value="1"/>
</dbReference>
<dbReference type="PANTHER" id="PTHR11760">
    <property type="entry name" value="30S/40S RIBOSOMAL PROTEIN S3"/>
    <property type="match status" value="1"/>
</dbReference>
<dbReference type="PANTHER" id="PTHR11760:SF19">
    <property type="entry name" value="SMALL RIBOSOMAL SUBUNIT PROTEIN US3C"/>
    <property type="match status" value="1"/>
</dbReference>
<dbReference type="Pfam" id="PF07650">
    <property type="entry name" value="KH_2"/>
    <property type="match status" value="1"/>
</dbReference>
<dbReference type="Pfam" id="PF00189">
    <property type="entry name" value="Ribosomal_S3_C"/>
    <property type="match status" value="1"/>
</dbReference>
<dbReference type="SMART" id="SM00322">
    <property type="entry name" value="KH"/>
    <property type="match status" value="1"/>
</dbReference>
<dbReference type="SUPFAM" id="SSF54814">
    <property type="entry name" value="Prokaryotic type KH domain (KH-domain type II)"/>
    <property type="match status" value="1"/>
</dbReference>
<dbReference type="SUPFAM" id="SSF54821">
    <property type="entry name" value="Ribosomal protein S3 C-terminal domain"/>
    <property type="match status" value="1"/>
</dbReference>
<dbReference type="PROSITE" id="PS50823">
    <property type="entry name" value="KH_TYPE_2"/>
    <property type="match status" value="1"/>
</dbReference>
<dbReference type="PROSITE" id="PS00548">
    <property type="entry name" value="RIBOSOMAL_S3"/>
    <property type="match status" value="1"/>
</dbReference>
<reference key="1">
    <citation type="journal article" date="2001" name="Nature">
        <title>Massive gene decay in the leprosy bacillus.</title>
        <authorList>
            <person name="Cole S.T."/>
            <person name="Eiglmeier K."/>
            <person name="Parkhill J."/>
            <person name="James K.D."/>
            <person name="Thomson N.R."/>
            <person name="Wheeler P.R."/>
            <person name="Honore N."/>
            <person name="Garnier T."/>
            <person name="Churcher C.M."/>
            <person name="Harris D.E."/>
            <person name="Mungall K.L."/>
            <person name="Basham D."/>
            <person name="Brown D."/>
            <person name="Chillingworth T."/>
            <person name="Connor R."/>
            <person name="Davies R.M."/>
            <person name="Devlin K."/>
            <person name="Duthoy S."/>
            <person name="Feltwell T."/>
            <person name="Fraser A."/>
            <person name="Hamlin N."/>
            <person name="Holroyd S."/>
            <person name="Hornsby T."/>
            <person name="Jagels K."/>
            <person name="Lacroix C."/>
            <person name="Maclean J."/>
            <person name="Moule S."/>
            <person name="Murphy L.D."/>
            <person name="Oliver K."/>
            <person name="Quail M.A."/>
            <person name="Rajandream M.A."/>
            <person name="Rutherford K.M."/>
            <person name="Rutter S."/>
            <person name="Seeger K."/>
            <person name="Simon S."/>
            <person name="Simmonds M."/>
            <person name="Skelton J."/>
            <person name="Squares R."/>
            <person name="Squares S."/>
            <person name="Stevens K."/>
            <person name="Taylor K."/>
            <person name="Whitehead S."/>
            <person name="Woodward J.R."/>
            <person name="Barrell B.G."/>
        </authorList>
    </citation>
    <scope>NUCLEOTIDE SEQUENCE [LARGE SCALE GENOMIC DNA]</scope>
    <source>
        <strain>TN</strain>
    </source>
</reference>
<comment type="function">
    <text evidence="1">Binds the lower part of the 30S subunit head. Binds mRNA in the 70S ribosome, positioning it for translation.</text>
</comment>
<comment type="subunit">
    <text evidence="1">Part of the 30S ribosomal subunit. Forms a tight complex with proteins S10 and S14.</text>
</comment>
<comment type="similarity">
    <text evidence="1">Belongs to the universal ribosomal protein uS3 family.</text>
</comment>
<name>RS3_MYCLE</name>
<protein>
    <recommendedName>
        <fullName evidence="1">Small ribosomal subunit protein uS3</fullName>
    </recommendedName>
    <alternativeName>
        <fullName evidence="3">30S ribosomal protein S3</fullName>
    </alternativeName>
</protein>
<organism>
    <name type="scientific">Mycobacterium leprae (strain TN)</name>
    <dbReference type="NCBI Taxonomy" id="272631"/>
    <lineage>
        <taxon>Bacteria</taxon>
        <taxon>Bacillati</taxon>
        <taxon>Actinomycetota</taxon>
        <taxon>Actinomycetes</taxon>
        <taxon>Mycobacteriales</taxon>
        <taxon>Mycobacteriaceae</taxon>
        <taxon>Mycobacterium</taxon>
    </lineage>
</organism>
<proteinExistence type="inferred from homology"/>
<feature type="chain" id="PRO_0000130152" description="Small ribosomal subunit protein uS3">
    <location>
        <begin position="1"/>
        <end position="281"/>
    </location>
</feature>
<feature type="domain" description="KH type-2" evidence="1">
    <location>
        <begin position="38"/>
        <end position="106"/>
    </location>
</feature>
<feature type="region of interest" description="Disordered" evidence="2">
    <location>
        <begin position="218"/>
        <end position="281"/>
    </location>
</feature>
<feature type="compositionally biased region" description="Low complexity" evidence="2">
    <location>
        <begin position="238"/>
        <end position="252"/>
    </location>
</feature>
<keyword id="KW-1185">Reference proteome</keyword>
<keyword id="KW-0687">Ribonucleoprotein</keyword>
<keyword id="KW-0689">Ribosomal protein</keyword>
<keyword id="KW-0694">RNA-binding</keyword>
<keyword id="KW-0699">rRNA-binding</keyword>
<accession>O32987</accession>
<evidence type="ECO:0000255" key="1">
    <source>
        <dbReference type="HAMAP-Rule" id="MF_01309"/>
    </source>
</evidence>
<evidence type="ECO:0000256" key="2">
    <source>
        <dbReference type="SAM" id="MobiDB-lite"/>
    </source>
</evidence>
<evidence type="ECO:0000305" key="3"/>
<sequence length="281" mass="30919">MGQKINPHGFRLGITTGWKSRWYADKQYAEYVKEDVAIRRLLSTGLERAGIADVEIERTRDRVRVDIHTARPGIVIGRRGTEADRIRADLEKLTCKQVQLNILEVKNPESQAQLVAQGVAEQLSNRVAFRRAMRKAIQSAMRQPNVKGIRVQCSGRLGGAEMSRSEFYREGRVPLHTLRADIDYGLHEAKTTFGRIGVKVWIYKGDIVGGKREVTAVAPAGAERARRERPSGTRPRRSGAAGTTVTGTDAGRAVGGEESAATNIGHSDDSVVTHEPQIAES</sequence>
<gene>
    <name evidence="1" type="primary">rpsC</name>
    <name type="ordered locus">ML1857</name>
    <name type="ORF">MLCB2492.08</name>
</gene>